<name>ARLY_ACIBY</name>
<evidence type="ECO:0000255" key="1">
    <source>
        <dbReference type="HAMAP-Rule" id="MF_00006"/>
    </source>
</evidence>
<reference key="1">
    <citation type="journal article" date="2008" name="PLoS ONE">
        <title>Comparative analysis of Acinetobacters: three genomes for three lifestyles.</title>
        <authorList>
            <person name="Vallenet D."/>
            <person name="Nordmann P."/>
            <person name="Barbe V."/>
            <person name="Poirel L."/>
            <person name="Mangenot S."/>
            <person name="Bataille E."/>
            <person name="Dossat C."/>
            <person name="Gas S."/>
            <person name="Kreimeyer A."/>
            <person name="Lenoble P."/>
            <person name="Oztas S."/>
            <person name="Poulain J."/>
            <person name="Segurens B."/>
            <person name="Robert C."/>
            <person name="Abergel C."/>
            <person name="Claverie J.-M."/>
            <person name="Raoult D."/>
            <person name="Medigue C."/>
            <person name="Weissenbach J."/>
            <person name="Cruveiller S."/>
        </authorList>
    </citation>
    <scope>NUCLEOTIDE SEQUENCE [LARGE SCALE GENOMIC DNA]</scope>
    <source>
        <strain>AYE</strain>
    </source>
</reference>
<comment type="catalytic activity">
    <reaction evidence="1">
        <text>2-(N(omega)-L-arginino)succinate = fumarate + L-arginine</text>
        <dbReference type="Rhea" id="RHEA:24020"/>
        <dbReference type="ChEBI" id="CHEBI:29806"/>
        <dbReference type="ChEBI" id="CHEBI:32682"/>
        <dbReference type="ChEBI" id="CHEBI:57472"/>
        <dbReference type="EC" id="4.3.2.1"/>
    </reaction>
</comment>
<comment type="pathway">
    <text evidence="1">Amino-acid biosynthesis; L-arginine biosynthesis; L-arginine from L-ornithine and carbamoyl phosphate: step 3/3.</text>
</comment>
<comment type="subcellular location">
    <subcellularLocation>
        <location evidence="1">Cytoplasm</location>
    </subcellularLocation>
</comment>
<comment type="similarity">
    <text evidence="1">Belongs to the lyase 1 family. Argininosuccinate lyase subfamily.</text>
</comment>
<proteinExistence type="inferred from homology"/>
<organism>
    <name type="scientific">Acinetobacter baumannii (strain AYE)</name>
    <dbReference type="NCBI Taxonomy" id="509173"/>
    <lineage>
        <taxon>Bacteria</taxon>
        <taxon>Pseudomonadati</taxon>
        <taxon>Pseudomonadota</taxon>
        <taxon>Gammaproteobacteria</taxon>
        <taxon>Moraxellales</taxon>
        <taxon>Moraxellaceae</taxon>
        <taxon>Acinetobacter</taxon>
        <taxon>Acinetobacter calcoaceticus/baumannii complex</taxon>
    </lineage>
</organism>
<keyword id="KW-0028">Amino-acid biosynthesis</keyword>
<keyword id="KW-0055">Arginine biosynthesis</keyword>
<keyword id="KW-0963">Cytoplasm</keyword>
<keyword id="KW-0456">Lyase</keyword>
<gene>
    <name evidence="1" type="primary">argH</name>
    <name type="ordered locus">ABAYE3511</name>
</gene>
<feature type="chain" id="PRO_1000116300" description="Argininosuccinate lyase">
    <location>
        <begin position="1"/>
        <end position="477"/>
    </location>
</feature>
<protein>
    <recommendedName>
        <fullName evidence="1">Argininosuccinate lyase</fullName>
        <shortName evidence="1">ASAL</shortName>
        <ecNumber evidence="1">4.3.2.1</ecNumber>
    </recommendedName>
    <alternativeName>
        <fullName evidence="1">Arginosuccinase</fullName>
    </alternativeName>
</protein>
<sequence>MTTSSNPPNSAAPNQTSGMWGGRFSEATDAFVAEFTASVQFDQRFYKQDIAGSIAHATMLAKVGVLTEAERDDIIEGLSTIRAEIEAGTFEWRIDLEDVHMNIESRLTQRIGITGKKLHTGRSRNDQVATDIRLYLRDEIDDILGLLERLQKGLLGLAAKNVNTIMPGFTHLQTAQPVTFGHHLLAWFEMLVRDTERLQDCRKRVNRMPLGSAALAGTTYPIDRAYTAELLGFEAVSENSLDAVSDRDFAIEFNAAASLIMMHLSRMSEELILWTSAQFKFVNIPDRFCTGSSIMPQKKNPDVPELIRGKSGRVFGDLVSLLTLMKGQPLAYNKDNQEDKEPLFDAIDTVRGSLMAFADMIPALVPNVEIMREAALRGFSTATDLADYLVKKGVAFRDAHEIVGKAVALGVAEEKDLSELTLEQLQQFSDLITADVFDKALTLEASVNARDHIGGTSPKQVEAAIARAHKRLEQLYA</sequence>
<dbReference type="EC" id="4.3.2.1" evidence="1"/>
<dbReference type="EMBL" id="CU459141">
    <property type="protein sequence ID" value="CAM88299.1"/>
    <property type="molecule type" value="Genomic_DNA"/>
</dbReference>
<dbReference type="RefSeq" id="WP_000213742.1">
    <property type="nucleotide sequence ID" value="NZ_JBDGFB010000019.1"/>
</dbReference>
<dbReference type="SMR" id="B0VDE4"/>
<dbReference type="EnsemblBacteria" id="CAM88299">
    <property type="protein sequence ID" value="CAM88299"/>
    <property type="gene ID" value="ABAYE3511"/>
</dbReference>
<dbReference type="KEGG" id="aby:ABAYE3511"/>
<dbReference type="HOGENOM" id="CLU_027272_2_3_6"/>
<dbReference type="UniPathway" id="UPA00068">
    <property type="reaction ID" value="UER00114"/>
</dbReference>
<dbReference type="GO" id="GO:0005829">
    <property type="term" value="C:cytosol"/>
    <property type="evidence" value="ECO:0007669"/>
    <property type="project" value="TreeGrafter"/>
</dbReference>
<dbReference type="GO" id="GO:0004056">
    <property type="term" value="F:argininosuccinate lyase activity"/>
    <property type="evidence" value="ECO:0007669"/>
    <property type="project" value="UniProtKB-UniRule"/>
</dbReference>
<dbReference type="GO" id="GO:0042450">
    <property type="term" value="P:arginine biosynthetic process via ornithine"/>
    <property type="evidence" value="ECO:0007669"/>
    <property type="project" value="InterPro"/>
</dbReference>
<dbReference type="GO" id="GO:0006526">
    <property type="term" value="P:L-arginine biosynthetic process"/>
    <property type="evidence" value="ECO:0007669"/>
    <property type="project" value="UniProtKB-UniRule"/>
</dbReference>
<dbReference type="CDD" id="cd01359">
    <property type="entry name" value="Argininosuccinate_lyase"/>
    <property type="match status" value="1"/>
</dbReference>
<dbReference type="FunFam" id="1.10.275.10:FF:000002">
    <property type="entry name" value="Argininosuccinate lyase"/>
    <property type="match status" value="1"/>
</dbReference>
<dbReference type="FunFam" id="1.10.40.30:FF:000001">
    <property type="entry name" value="Argininosuccinate lyase"/>
    <property type="match status" value="1"/>
</dbReference>
<dbReference type="FunFam" id="1.20.200.10:FF:000015">
    <property type="entry name" value="argininosuccinate lyase isoform X2"/>
    <property type="match status" value="1"/>
</dbReference>
<dbReference type="Gene3D" id="1.10.40.30">
    <property type="entry name" value="Fumarase/aspartase (C-terminal domain)"/>
    <property type="match status" value="1"/>
</dbReference>
<dbReference type="Gene3D" id="1.20.200.10">
    <property type="entry name" value="Fumarase/aspartase (Central domain)"/>
    <property type="match status" value="1"/>
</dbReference>
<dbReference type="Gene3D" id="1.10.275.10">
    <property type="entry name" value="Fumarase/aspartase (N-terminal domain)"/>
    <property type="match status" value="1"/>
</dbReference>
<dbReference type="HAMAP" id="MF_00006">
    <property type="entry name" value="Arg_succ_lyase"/>
    <property type="match status" value="1"/>
</dbReference>
<dbReference type="InterPro" id="IPR029419">
    <property type="entry name" value="Arg_succ_lyase_C"/>
</dbReference>
<dbReference type="InterPro" id="IPR009049">
    <property type="entry name" value="Argininosuccinate_lyase"/>
</dbReference>
<dbReference type="InterPro" id="IPR024083">
    <property type="entry name" value="Fumarase/histidase_N"/>
</dbReference>
<dbReference type="InterPro" id="IPR020557">
    <property type="entry name" value="Fumarate_lyase_CS"/>
</dbReference>
<dbReference type="InterPro" id="IPR000362">
    <property type="entry name" value="Fumarate_lyase_fam"/>
</dbReference>
<dbReference type="InterPro" id="IPR022761">
    <property type="entry name" value="Fumarate_lyase_N"/>
</dbReference>
<dbReference type="InterPro" id="IPR008948">
    <property type="entry name" value="L-Aspartase-like"/>
</dbReference>
<dbReference type="NCBIfam" id="TIGR00838">
    <property type="entry name" value="argH"/>
    <property type="match status" value="1"/>
</dbReference>
<dbReference type="PANTHER" id="PTHR43814">
    <property type="entry name" value="ARGININOSUCCINATE LYASE"/>
    <property type="match status" value="1"/>
</dbReference>
<dbReference type="PANTHER" id="PTHR43814:SF1">
    <property type="entry name" value="ARGININOSUCCINATE LYASE"/>
    <property type="match status" value="1"/>
</dbReference>
<dbReference type="Pfam" id="PF14698">
    <property type="entry name" value="ASL_C2"/>
    <property type="match status" value="1"/>
</dbReference>
<dbReference type="Pfam" id="PF00206">
    <property type="entry name" value="Lyase_1"/>
    <property type="match status" value="1"/>
</dbReference>
<dbReference type="PRINTS" id="PR00145">
    <property type="entry name" value="ARGSUCLYASE"/>
</dbReference>
<dbReference type="PRINTS" id="PR00149">
    <property type="entry name" value="FUMRATELYASE"/>
</dbReference>
<dbReference type="SUPFAM" id="SSF48557">
    <property type="entry name" value="L-aspartase-like"/>
    <property type="match status" value="1"/>
</dbReference>
<dbReference type="PROSITE" id="PS00163">
    <property type="entry name" value="FUMARATE_LYASES"/>
    <property type="match status" value="1"/>
</dbReference>
<accession>B0VDE4</accession>